<sequence length="566" mass="63190">MKQSMVFSPTLREVPADAEIKSHQLLLRAGFMRQNASGIYSFLPFGLKVLHKVERIVREEMERAGAVELLMPAMQAAELWQESGRWYSYGSELMRMKDRNAREFALGATHEEVITDLVRDEVKSYKKLPLTLYQIQTKFRDEQRPRFGLLRGREFLMKDAYSFHATQESLDEVYDRLYKAYSNIFARCGLNFRAVIADSGAMGGKDTHEFMVLSDVGEDTIAYSDTSDYAANIEMAPVVATYTKSDEAEKALEKVATPDQKAIEEVSAFLNIEADKCIKSMVFKVDEKLVVVLVRGDHEVNDVKVKNVYGASVVELASHEEVKALLNWEVGSLGPINVTGDIEIIADHAVASIVNGCSGANEEGFHYVNVNPERDFKVSQYTDLRFIQEGDQSPDGNGTILFARGIEVGHVFKLGTRYSEAMNATFLDENGKTQPLIMGCYGIGVSRTVAAIAEQFNDENGLVWPKAVAPFHVHVIPVNMKSDAQREMGENIYNSLQEQGYEVLLDDRAERAGVKFADADLFGLPVRVTVGKKADEGIVEVKVRATGESEEVKVEELQTYIANILK</sequence>
<proteinExistence type="inferred from homology"/>
<accession>Q819Y4</accession>
<organism>
    <name type="scientific">Bacillus cereus (strain ATCC 14579 / DSM 31 / CCUG 7414 / JCM 2152 / NBRC 15305 / NCIMB 9373 / NCTC 2599 / NRRL B-3711)</name>
    <dbReference type="NCBI Taxonomy" id="226900"/>
    <lineage>
        <taxon>Bacteria</taxon>
        <taxon>Bacillati</taxon>
        <taxon>Bacillota</taxon>
        <taxon>Bacilli</taxon>
        <taxon>Bacillales</taxon>
        <taxon>Bacillaceae</taxon>
        <taxon>Bacillus</taxon>
        <taxon>Bacillus cereus group</taxon>
    </lineage>
</organism>
<dbReference type="EC" id="6.1.1.15" evidence="1"/>
<dbReference type="EMBL" id="AE016877">
    <property type="protein sequence ID" value="AAP10740.1"/>
    <property type="molecule type" value="Genomic_DNA"/>
</dbReference>
<dbReference type="RefSeq" id="NP_833539.1">
    <property type="nucleotide sequence ID" value="NC_004722.1"/>
</dbReference>
<dbReference type="RefSeq" id="WP_000814303.1">
    <property type="nucleotide sequence ID" value="NC_004722.1"/>
</dbReference>
<dbReference type="SMR" id="Q819Y4"/>
<dbReference type="STRING" id="226900.BC_3817"/>
<dbReference type="KEGG" id="bce:BC3817"/>
<dbReference type="PATRIC" id="fig|226900.8.peg.3935"/>
<dbReference type="HOGENOM" id="CLU_016739_0_0_9"/>
<dbReference type="Proteomes" id="UP000001417">
    <property type="component" value="Chromosome"/>
</dbReference>
<dbReference type="GO" id="GO:0005829">
    <property type="term" value="C:cytosol"/>
    <property type="evidence" value="ECO:0000318"/>
    <property type="project" value="GO_Central"/>
</dbReference>
<dbReference type="GO" id="GO:0002161">
    <property type="term" value="F:aminoacyl-tRNA deacylase activity"/>
    <property type="evidence" value="ECO:0007669"/>
    <property type="project" value="InterPro"/>
</dbReference>
<dbReference type="GO" id="GO:0005524">
    <property type="term" value="F:ATP binding"/>
    <property type="evidence" value="ECO:0007669"/>
    <property type="project" value="UniProtKB-UniRule"/>
</dbReference>
<dbReference type="GO" id="GO:0140096">
    <property type="term" value="F:catalytic activity, acting on a protein"/>
    <property type="evidence" value="ECO:0007669"/>
    <property type="project" value="UniProtKB-ARBA"/>
</dbReference>
<dbReference type="GO" id="GO:0004827">
    <property type="term" value="F:proline-tRNA ligase activity"/>
    <property type="evidence" value="ECO:0000318"/>
    <property type="project" value="GO_Central"/>
</dbReference>
<dbReference type="GO" id="GO:0016740">
    <property type="term" value="F:transferase activity"/>
    <property type="evidence" value="ECO:0007669"/>
    <property type="project" value="UniProtKB-ARBA"/>
</dbReference>
<dbReference type="GO" id="GO:0006433">
    <property type="term" value="P:prolyl-tRNA aminoacylation"/>
    <property type="evidence" value="ECO:0000318"/>
    <property type="project" value="GO_Central"/>
</dbReference>
<dbReference type="CDD" id="cd04334">
    <property type="entry name" value="ProRS-INS"/>
    <property type="match status" value="1"/>
</dbReference>
<dbReference type="CDD" id="cd00861">
    <property type="entry name" value="ProRS_anticodon_short"/>
    <property type="match status" value="1"/>
</dbReference>
<dbReference type="CDD" id="cd00779">
    <property type="entry name" value="ProRS_core_prok"/>
    <property type="match status" value="1"/>
</dbReference>
<dbReference type="FunFam" id="3.30.930.10:FF:000043">
    <property type="entry name" value="Proline--tRNA ligase"/>
    <property type="match status" value="1"/>
</dbReference>
<dbReference type="FunFam" id="3.30.930.10:FF:000065">
    <property type="entry name" value="Proline--tRNA ligase"/>
    <property type="match status" value="1"/>
</dbReference>
<dbReference type="FunFam" id="3.40.50.800:FF:000011">
    <property type="entry name" value="Proline--tRNA ligase"/>
    <property type="match status" value="1"/>
</dbReference>
<dbReference type="Gene3D" id="3.40.50.800">
    <property type="entry name" value="Anticodon-binding domain"/>
    <property type="match status" value="1"/>
</dbReference>
<dbReference type="Gene3D" id="3.30.930.10">
    <property type="entry name" value="Bira Bifunctional Protein, Domain 2"/>
    <property type="match status" value="2"/>
</dbReference>
<dbReference type="HAMAP" id="MF_01569">
    <property type="entry name" value="Pro_tRNA_synth_type1"/>
    <property type="match status" value="1"/>
</dbReference>
<dbReference type="InterPro" id="IPR002314">
    <property type="entry name" value="aa-tRNA-synt_IIb"/>
</dbReference>
<dbReference type="InterPro" id="IPR006195">
    <property type="entry name" value="aa-tRNA-synth_II"/>
</dbReference>
<dbReference type="InterPro" id="IPR045864">
    <property type="entry name" value="aa-tRNA-synth_II/BPL/LPL"/>
</dbReference>
<dbReference type="InterPro" id="IPR004154">
    <property type="entry name" value="Anticodon-bd"/>
</dbReference>
<dbReference type="InterPro" id="IPR036621">
    <property type="entry name" value="Anticodon-bd_dom_sf"/>
</dbReference>
<dbReference type="InterPro" id="IPR002316">
    <property type="entry name" value="Pro-tRNA-ligase_IIa"/>
</dbReference>
<dbReference type="InterPro" id="IPR004500">
    <property type="entry name" value="Pro-tRNA-synth_IIa_bac-type"/>
</dbReference>
<dbReference type="InterPro" id="IPR023717">
    <property type="entry name" value="Pro-tRNA-Synthase_IIa_type1"/>
</dbReference>
<dbReference type="InterPro" id="IPR050062">
    <property type="entry name" value="Pro-tRNA_synthetase"/>
</dbReference>
<dbReference type="InterPro" id="IPR044140">
    <property type="entry name" value="ProRS_anticodon_short"/>
</dbReference>
<dbReference type="InterPro" id="IPR033730">
    <property type="entry name" value="ProRS_core_prok"/>
</dbReference>
<dbReference type="InterPro" id="IPR036754">
    <property type="entry name" value="YbaK/aa-tRNA-synt-asso_dom_sf"/>
</dbReference>
<dbReference type="InterPro" id="IPR007214">
    <property type="entry name" value="YbaK/aa-tRNA-synth-assoc-dom"/>
</dbReference>
<dbReference type="NCBIfam" id="NF006625">
    <property type="entry name" value="PRK09194.1"/>
    <property type="match status" value="1"/>
</dbReference>
<dbReference type="NCBIfam" id="TIGR00409">
    <property type="entry name" value="proS_fam_II"/>
    <property type="match status" value="1"/>
</dbReference>
<dbReference type="PANTHER" id="PTHR42753">
    <property type="entry name" value="MITOCHONDRIAL RIBOSOME PROTEIN L39/PROLYL-TRNA LIGASE FAMILY MEMBER"/>
    <property type="match status" value="1"/>
</dbReference>
<dbReference type="PANTHER" id="PTHR42753:SF2">
    <property type="entry name" value="PROLINE--TRNA LIGASE"/>
    <property type="match status" value="1"/>
</dbReference>
<dbReference type="Pfam" id="PF03129">
    <property type="entry name" value="HGTP_anticodon"/>
    <property type="match status" value="1"/>
</dbReference>
<dbReference type="Pfam" id="PF00587">
    <property type="entry name" value="tRNA-synt_2b"/>
    <property type="match status" value="1"/>
</dbReference>
<dbReference type="Pfam" id="PF04073">
    <property type="entry name" value="tRNA_edit"/>
    <property type="match status" value="1"/>
</dbReference>
<dbReference type="PIRSF" id="PIRSF001535">
    <property type="entry name" value="ProRS_1"/>
    <property type="match status" value="1"/>
</dbReference>
<dbReference type="PRINTS" id="PR01046">
    <property type="entry name" value="TRNASYNTHPRO"/>
</dbReference>
<dbReference type="SUPFAM" id="SSF52954">
    <property type="entry name" value="Class II aaRS ABD-related"/>
    <property type="match status" value="1"/>
</dbReference>
<dbReference type="SUPFAM" id="SSF55681">
    <property type="entry name" value="Class II aaRS and biotin synthetases"/>
    <property type="match status" value="1"/>
</dbReference>
<dbReference type="SUPFAM" id="SSF55826">
    <property type="entry name" value="YbaK/ProRS associated domain"/>
    <property type="match status" value="1"/>
</dbReference>
<dbReference type="PROSITE" id="PS50862">
    <property type="entry name" value="AA_TRNA_LIGASE_II"/>
    <property type="match status" value="1"/>
</dbReference>
<keyword id="KW-0030">Aminoacyl-tRNA synthetase</keyword>
<keyword id="KW-0067">ATP-binding</keyword>
<keyword id="KW-0963">Cytoplasm</keyword>
<keyword id="KW-0436">Ligase</keyword>
<keyword id="KW-0547">Nucleotide-binding</keyword>
<keyword id="KW-0648">Protein biosynthesis</keyword>
<keyword id="KW-1185">Reference proteome</keyword>
<feature type="chain" id="PRO_0000248644" description="Proline--tRNA ligase 1">
    <location>
        <begin position="1"/>
        <end position="566"/>
    </location>
</feature>
<protein>
    <recommendedName>
        <fullName evidence="1">Proline--tRNA ligase 1</fullName>
        <ecNumber evidence="1">6.1.1.15</ecNumber>
    </recommendedName>
    <alternativeName>
        <fullName evidence="1">Prolyl-tRNA synthetase 1</fullName>
        <shortName evidence="1">ProRS 1</shortName>
    </alternativeName>
</protein>
<gene>
    <name evidence="1" type="primary">proS1</name>
    <name type="ordered locus">BC_3817</name>
</gene>
<reference key="1">
    <citation type="journal article" date="2003" name="Nature">
        <title>Genome sequence of Bacillus cereus and comparative analysis with Bacillus anthracis.</title>
        <authorList>
            <person name="Ivanova N."/>
            <person name="Sorokin A."/>
            <person name="Anderson I."/>
            <person name="Galleron N."/>
            <person name="Candelon B."/>
            <person name="Kapatral V."/>
            <person name="Bhattacharyya A."/>
            <person name="Reznik G."/>
            <person name="Mikhailova N."/>
            <person name="Lapidus A."/>
            <person name="Chu L."/>
            <person name="Mazur M."/>
            <person name="Goltsman E."/>
            <person name="Larsen N."/>
            <person name="D'Souza M."/>
            <person name="Walunas T."/>
            <person name="Grechkin Y."/>
            <person name="Pusch G."/>
            <person name="Haselkorn R."/>
            <person name="Fonstein M."/>
            <person name="Ehrlich S.D."/>
            <person name="Overbeek R."/>
            <person name="Kyrpides N.C."/>
        </authorList>
    </citation>
    <scope>NUCLEOTIDE SEQUENCE [LARGE SCALE GENOMIC DNA]</scope>
    <source>
        <strain>ATCC 14579 / DSM 31 / CCUG 7414 / JCM 2152 / NBRC 15305 / NCIMB 9373 / NCTC 2599 / NRRL B-3711</strain>
    </source>
</reference>
<comment type="function">
    <text evidence="1">Catalyzes the attachment of proline to tRNA(Pro) in a two-step reaction: proline is first activated by ATP to form Pro-AMP and then transferred to the acceptor end of tRNA(Pro). As ProRS can inadvertently accommodate and process non-cognate amino acids such as alanine and cysteine, to avoid such errors it has two additional distinct editing activities against alanine. One activity is designated as 'pretransfer' editing and involves the tRNA(Pro)-independent hydrolysis of activated Ala-AMP. The other activity is designated 'posttransfer' editing and involves deacylation of mischarged Ala-tRNA(Pro). The misacylated Cys-tRNA(Pro) is not edited by ProRS.</text>
</comment>
<comment type="catalytic activity">
    <reaction evidence="1">
        <text>tRNA(Pro) + L-proline + ATP = L-prolyl-tRNA(Pro) + AMP + diphosphate</text>
        <dbReference type="Rhea" id="RHEA:14305"/>
        <dbReference type="Rhea" id="RHEA-COMP:9700"/>
        <dbReference type="Rhea" id="RHEA-COMP:9702"/>
        <dbReference type="ChEBI" id="CHEBI:30616"/>
        <dbReference type="ChEBI" id="CHEBI:33019"/>
        <dbReference type="ChEBI" id="CHEBI:60039"/>
        <dbReference type="ChEBI" id="CHEBI:78442"/>
        <dbReference type="ChEBI" id="CHEBI:78532"/>
        <dbReference type="ChEBI" id="CHEBI:456215"/>
        <dbReference type="EC" id="6.1.1.15"/>
    </reaction>
</comment>
<comment type="subunit">
    <text evidence="1">Homodimer.</text>
</comment>
<comment type="subcellular location">
    <subcellularLocation>
        <location evidence="1">Cytoplasm</location>
    </subcellularLocation>
</comment>
<comment type="domain">
    <text evidence="1">Consists of three domains: the N-terminal catalytic domain, the editing domain and the C-terminal anticodon-binding domain.</text>
</comment>
<comment type="similarity">
    <text evidence="1">Belongs to the class-II aminoacyl-tRNA synthetase family. ProS type 1 subfamily.</text>
</comment>
<name>SYP1_BACCR</name>
<evidence type="ECO:0000255" key="1">
    <source>
        <dbReference type="HAMAP-Rule" id="MF_01569"/>
    </source>
</evidence>